<accession>A0A286YF77</accession>
<evidence type="ECO:0000303" key="1">
    <source>
    </source>
</evidence>
<evidence type="ECO:0000305" key="2"/>
<evidence type="ECO:0000305" key="3">
    <source>
    </source>
</evidence>
<evidence type="ECO:0000312" key="4">
    <source>
        <dbReference type="HGNC" id="HGNC:34225"/>
    </source>
</evidence>
<name>SCGR6_HUMAN</name>
<reference key="1">
    <citation type="journal article" date="2005" name="Nature">
        <title>Generation and annotation of the DNA sequences of human chromosomes 2 and 4.</title>
        <authorList>
            <person name="Hillier L.W."/>
            <person name="Graves T.A."/>
            <person name="Fulton R.S."/>
            <person name="Fulton L.A."/>
            <person name="Pepin K.H."/>
            <person name="Minx P."/>
            <person name="Wagner-McPherson C."/>
            <person name="Layman D."/>
            <person name="Wylie K."/>
            <person name="Sekhon M."/>
            <person name="Becker M.C."/>
            <person name="Fewell G.A."/>
            <person name="Delehaunty K.D."/>
            <person name="Miner T.L."/>
            <person name="Nash W.E."/>
            <person name="Kremitzki C."/>
            <person name="Oddy L."/>
            <person name="Du H."/>
            <person name="Sun H."/>
            <person name="Bradshaw-Cordum H."/>
            <person name="Ali J."/>
            <person name="Carter J."/>
            <person name="Cordes M."/>
            <person name="Harris A."/>
            <person name="Isak A."/>
            <person name="van Brunt A."/>
            <person name="Nguyen C."/>
            <person name="Du F."/>
            <person name="Courtney L."/>
            <person name="Kalicki J."/>
            <person name="Ozersky P."/>
            <person name="Abbott S."/>
            <person name="Armstrong J."/>
            <person name="Belter E.A."/>
            <person name="Caruso L."/>
            <person name="Cedroni M."/>
            <person name="Cotton M."/>
            <person name="Davidson T."/>
            <person name="Desai A."/>
            <person name="Elliott G."/>
            <person name="Erb T."/>
            <person name="Fronick C."/>
            <person name="Gaige T."/>
            <person name="Haakenson W."/>
            <person name="Haglund K."/>
            <person name="Holmes A."/>
            <person name="Harkins R."/>
            <person name="Kim K."/>
            <person name="Kruchowski S.S."/>
            <person name="Strong C.M."/>
            <person name="Grewal N."/>
            <person name="Goyea E."/>
            <person name="Hou S."/>
            <person name="Levy A."/>
            <person name="Martinka S."/>
            <person name="Mead K."/>
            <person name="McLellan M.D."/>
            <person name="Meyer R."/>
            <person name="Randall-Maher J."/>
            <person name="Tomlinson C."/>
            <person name="Dauphin-Kohlberg S."/>
            <person name="Kozlowicz-Reilly A."/>
            <person name="Shah N."/>
            <person name="Swearengen-Shahid S."/>
            <person name="Snider J."/>
            <person name="Strong J.T."/>
            <person name="Thompson J."/>
            <person name="Yoakum M."/>
            <person name="Leonard S."/>
            <person name="Pearman C."/>
            <person name="Trani L."/>
            <person name="Radionenko M."/>
            <person name="Waligorski J.E."/>
            <person name="Wang C."/>
            <person name="Rock S.M."/>
            <person name="Tin-Wollam A.-M."/>
            <person name="Maupin R."/>
            <person name="Latreille P."/>
            <person name="Wendl M.C."/>
            <person name="Yang S.-P."/>
            <person name="Pohl C."/>
            <person name="Wallis J.W."/>
            <person name="Spieth J."/>
            <person name="Bieri T.A."/>
            <person name="Berkowicz N."/>
            <person name="Nelson J.O."/>
            <person name="Osborne J."/>
            <person name="Ding L."/>
            <person name="Meyer R."/>
            <person name="Sabo A."/>
            <person name="Shotland Y."/>
            <person name="Sinha P."/>
            <person name="Wohldmann P.E."/>
            <person name="Cook L.L."/>
            <person name="Hickenbotham M.T."/>
            <person name="Eldred J."/>
            <person name="Williams D."/>
            <person name="Jones T.A."/>
            <person name="She X."/>
            <person name="Ciccarelli F.D."/>
            <person name="Izaurralde E."/>
            <person name="Taylor J."/>
            <person name="Schmutz J."/>
            <person name="Myers R.M."/>
            <person name="Cox D.R."/>
            <person name="Huang X."/>
            <person name="McPherson J.D."/>
            <person name="Mardis E.R."/>
            <person name="Clifton S.W."/>
            <person name="Warren W.C."/>
            <person name="Chinwalla A.T."/>
            <person name="Eddy S.R."/>
            <person name="Marra M.A."/>
            <person name="Ovcharenko I."/>
            <person name="Furey T.S."/>
            <person name="Miller W."/>
            <person name="Eichler E.E."/>
            <person name="Bork P."/>
            <person name="Suyama M."/>
            <person name="Torrents D."/>
            <person name="Waterston R.H."/>
            <person name="Wilson R.K."/>
        </authorList>
    </citation>
    <scope>NUCLEOTIDE SEQUENCE [LARGE SCALE GENOMIC DNA]</scope>
</reference>
<reference key="2">
    <citation type="journal article" date="2008" name="BMC Evol. Biol.">
        <title>Molecular evolution of the keratin associated protein gene family in mammals, role in the evolution of mammalian hair.</title>
        <authorList>
            <person name="Wu D.D."/>
            <person name="Irwin D.M."/>
            <person name="Zhang Y.P."/>
        </authorList>
    </citation>
    <scope>FAMILY CHARACTERIZATION</scope>
</reference>
<protein>
    <recommendedName>
        <fullName evidence="2">Small cysteine and glycine repeat-containing protein 6</fullName>
    </recommendedName>
    <alternativeName>
        <fullName evidence="1">Keratin-associated protein 28-6</fullName>
    </alternativeName>
</protein>
<organism>
    <name type="scientific">Homo sapiens</name>
    <name type="common">Human</name>
    <dbReference type="NCBI Taxonomy" id="9606"/>
    <lineage>
        <taxon>Eukaryota</taxon>
        <taxon>Metazoa</taxon>
        <taxon>Chordata</taxon>
        <taxon>Craniata</taxon>
        <taxon>Vertebrata</taxon>
        <taxon>Euteleostomi</taxon>
        <taxon>Mammalia</taxon>
        <taxon>Eutheria</taxon>
        <taxon>Euarchontoglires</taxon>
        <taxon>Primates</taxon>
        <taxon>Haplorrhini</taxon>
        <taxon>Catarrhini</taxon>
        <taxon>Hominidae</taxon>
        <taxon>Homo</taxon>
    </lineage>
</organism>
<gene>
    <name evidence="4" type="primary">SCYGR6</name>
    <name evidence="1" type="synonym">KRTAP28-6</name>
</gene>
<feature type="chain" id="PRO_0000445146" description="Small cysteine and glycine repeat-containing protein 6">
    <location>
        <begin position="1"/>
        <end position="105"/>
    </location>
</feature>
<feature type="region of interest" description="13 X 2 AA repeats of CG" evidence="2">
    <location>
        <begin position="4"/>
        <end position="83"/>
    </location>
</feature>
<dbReference type="EMBL" id="AC093762">
    <property type="status" value="NOT_ANNOTATED_CDS"/>
    <property type="molecule type" value="Genomic_DNA"/>
</dbReference>
<dbReference type="CCDS" id="CCDS92958.1"/>
<dbReference type="RefSeq" id="NP_001382336.1">
    <property type="nucleotide sequence ID" value="NM_001395407.1"/>
</dbReference>
<dbReference type="BioMuta" id="ENSG00000284725"/>
<dbReference type="MassIVE" id="A0A286YF77"/>
<dbReference type="PeptideAtlas" id="A0A286YF77"/>
<dbReference type="Ensembl" id="ENST00000641918.1">
    <property type="protein sequence ID" value="ENSP00000493292.1"/>
    <property type="gene ID" value="ENSG00000284725.1"/>
</dbReference>
<dbReference type="GeneID" id="112441431"/>
<dbReference type="MANE-Select" id="ENST00000641918.1">
    <property type="protein sequence ID" value="ENSP00000493292.1"/>
    <property type="RefSeq nucleotide sequence ID" value="NM_001395407.1"/>
    <property type="RefSeq protein sequence ID" value="NP_001382336.1"/>
</dbReference>
<dbReference type="AGR" id="HGNC:34225"/>
<dbReference type="GeneCards" id="SCYGR6"/>
<dbReference type="HGNC" id="HGNC:34225">
    <property type="gene designation" value="SCYGR6"/>
</dbReference>
<dbReference type="HPA" id="ENSG00000284725">
    <property type="expression patterns" value="Not detected"/>
</dbReference>
<dbReference type="neXtProt" id="NX_A0A286YF77"/>
<dbReference type="VEuPathDB" id="HostDB:ENSG00000284725"/>
<dbReference type="GeneTree" id="ENSGT00950000183409"/>
<dbReference type="InParanoid" id="A0A286YF77"/>
<dbReference type="OMA" id="GECCAKK"/>
<dbReference type="PAN-GO" id="A0A286YF77">
    <property type="GO annotations" value="0 GO annotations based on evolutionary models"/>
</dbReference>
<dbReference type="Pharos" id="A0A286YF77">
    <property type="development level" value="Tdark"/>
</dbReference>
<dbReference type="PRO" id="PR:A0A286YF77"/>
<dbReference type="Proteomes" id="UP000005640">
    <property type="component" value="Chromosome 2"/>
</dbReference>
<dbReference type="Bgee" id="ENSG00000284725">
    <property type="expression patterns" value="Expressed in skin of abdomen and 15 other cell types or tissues"/>
</dbReference>
<dbReference type="GO" id="GO:0005882">
    <property type="term" value="C:intermediate filament"/>
    <property type="evidence" value="ECO:0007669"/>
    <property type="project" value="UniProtKB-KW"/>
</dbReference>
<proteinExistence type="evidence at protein level"/>
<keyword id="KW-0416">Keratin</keyword>
<keyword id="KW-1267">Proteomics identification</keyword>
<keyword id="KW-1185">Reference proteome</keyword>
<keyword id="KW-0677">Repeat</keyword>
<comment type="function">
    <text evidence="2">In the hair cortex, hair keratin intermediate filaments are embedded in an interfilamentous matrix, consisting of hair keratin-associated proteins (KRTAP), which are essential for the formation of a rigid and resistant hair shaft through their extensive disulfide bond cross-linking with abundant cysteine residues of hair keratins. The matrix proteins include the high-sulfur and high-glycine-tyrosine keratins.</text>
</comment>
<comment type="miscellaneous">
    <text evidence="1">Human have a similar number of genes as other primates despite the relative hairlessness of humans.</text>
</comment>
<comment type="similarity">
    <text evidence="3">Belongs to the KRTAP type 28 family.</text>
</comment>
<sequence>MGCCGCGGCGGGCGGCGGGCSGGCGGGCGGGCGSCTTCRCYRVGCCSSCCPCCRGCCGGCCSTPVICCCRRTCHSCGCGCGCGKGCCQQKGCCQQKGCCKKQCCC</sequence>